<keyword id="KW-0056">Arginine metabolism</keyword>
<keyword id="KW-0378">Hydrolase</keyword>
<keyword id="KW-1185">Reference proteome</keyword>
<dbReference type="EC" id="3.5.3.23" evidence="1"/>
<dbReference type="EMBL" id="CP000103">
    <property type="protein sequence ID" value="ABB74895.1"/>
    <property type="molecule type" value="Genomic_DNA"/>
</dbReference>
<dbReference type="RefSeq" id="WP_011380922.1">
    <property type="nucleotide sequence ID" value="NC_007614.1"/>
</dbReference>
<dbReference type="SMR" id="Q2Y8M6"/>
<dbReference type="STRING" id="323848.Nmul_A1594"/>
<dbReference type="KEGG" id="nmu:Nmul_A1594"/>
<dbReference type="eggNOG" id="COG3724">
    <property type="taxonomic scope" value="Bacteria"/>
</dbReference>
<dbReference type="HOGENOM" id="CLU_053835_0_0_4"/>
<dbReference type="OrthoDB" id="248552at2"/>
<dbReference type="UniPathway" id="UPA00185">
    <property type="reaction ID" value="UER00280"/>
</dbReference>
<dbReference type="Proteomes" id="UP000002718">
    <property type="component" value="Chromosome"/>
</dbReference>
<dbReference type="GO" id="GO:0009015">
    <property type="term" value="F:N-succinylarginine dihydrolase activity"/>
    <property type="evidence" value="ECO:0007669"/>
    <property type="project" value="UniProtKB-UniRule"/>
</dbReference>
<dbReference type="GO" id="GO:0019544">
    <property type="term" value="P:arginine catabolic process to glutamate"/>
    <property type="evidence" value="ECO:0007669"/>
    <property type="project" value="UniProtKB-UniRule"/>
</dbReference>
<dbReference type="GO" id="GO:0019545">
    <property type="term" value="P:arginine catabolic process to succinate"/>
    <property type="evidence" value="ECO:0007669"/>
    <property type="project" value="UniProtKB-UniRule"/>
</dbReference>
<dbReference type="Gene3D" id="3.75.10.20">
    <property type="entry name" value="Succinylarginine dihydrolase"/>
    <property type="match status" value="1"/>
</dbReference>
<dbReference type="HAMAP" id="MF_01172">
    <property type="entry name" value="AstB"/>
    <property type="match status" value="1"/>
</dbReference>
<dbReference type="InterPro" id="IPR037031">
    <property type="entry name" value="AstB_sf"/>
</dbReference>
<dbReference type="InterPro" id="IPR007079">
    <property type="entry name" value="SuccinylArg_d-Hdrlase_AstB"/>
</dbReference>
<dbReference type="NCBIfam" id="TIGR03241">
    <property type="entry name" value="arg_catab_astB"/>
    <property type="match status" value="1"/>
</dbReference>
<dbReference type="NCBIfam" id="NF009789">
    <property type="entry name" value="PRK13281.1"/>
    <property type="match status" value="1"/>
</dbReference>
<dbReference type="PANTHER" id="PTHR30420">
    <property type="entry name" value="N-SUCCINYLARGININE DIHYDROLASE"/>
    <property type="match status" value="1"/>
</dbReference>
<dbReference type="PANTHER" id="PTHR30420:SF2">
    <property type="entry name" value="N-SUCCINYLARGININE DIHYDROLASE"/>
    <property type="match status" value="1"/>
</dbReference>
<dbReference type="Pfam" id="PF04996">
    <property type="entry name" value="AstB"/>
    <property type="match status" value="1"/>
</dbReference>
<dbReference type="SUPFAM" id="SSF55909">
    <property type="entry name" value="Pentein"/>
    <property type="match status" value="1"/>
</dbReference>
<gene>
    <name evidence="1" type="primary">astB</name>
    <name type="ordered locus">Nmul_A1594</name>
</gene>
<proteinExistence type="inferred from homology"/>
<name>ASTB_NITMU</name>
<reference key="1">
    <citation type="submission" date="2005-08" db="EMBL/GenBank/DDBJ databases">
        <title>Complete sequence of chromosome 1 of Nitrosospira multiformis ATCC 25196.</title>
        <authorList>
            <person name="Copeland A."/>
            <person name="Lucas S."/>
            <person name="Lapidus A."/>
            <person name="Barry K."/>
            <person name="Detter J.C."/>
            <person name="Glavina T."/>
            <person name="Hammon N."/>
            <person name="Israni S."/>
            <person name="Pitluck S."/>
            <person name="Chain P."/>
            <person name="Malfatti S."/>
            <person name="Shin M."/>
            <person name="Vergez L."/>
            <person name="Schmutz J."/>
            <person name="Larimer F."/>
            <person name="Land M."/>
            <person name="Hauser L."/>
            <person name="Kyrpides N."/>
            <person name="Lykidis A."/>
            <person name="Richardson P."/>
        </authorList>
    </citation>
    <scope>NUCLEOTIDE SEQUENCE [LARGE SCALE GENOMIC DNA]</scope>
    <source>
        <strain>ATCC 25196 / NCIMB 11849 / C 71</strain>
    </source>
</reference>
<organism>
    <name type="scientific">Nitrosospira multiformis (strain ATCC 25196 / NCIMB 11849 / C 71)</name>
    <dbReference type="NCBI Taxonomy" id="323848"/>
    <lineage>
        <taxon>Bacteria</taxon>
        <taxon>Pseudomonadati</taxon>
        <taxon>Pseudomonadota</taxon>
        <taxon>Betaproteobacteria</taxon>
        <taxon>Nitrosomonadales</taxon>
        <taxon>Nitrosomonadaceae</taxon>
        <taxon>Nitrosospira</taxon>
    </lineage>
</organism>
<comment type="function">
    <text evidence="1">Catalyzes the hydrolysis of N(2)-succinylarginine into N(2)-succinylornithine, ammonia and CO(2).</text>
</comment>
<comment type="catalytic activity">
    <reaction evidence="1">
        <text>N(2)-succinyl-L-arginine + 2 H2O + 2 H(+) = N(2)-succinyl-L-ornithine + 2 NH4(+) + CO2</text>
        <dbReference type="Rhea" id="RHEA:19533"/>
        <dbReference type="ChEBI" id="CHEBI:15377"/>
        <dbReference type="ChEBI" id="CHEBI:15378"/>
        <dbReference type="ChEBI" id="CHEBI:16526"/>
        <dbReference type="ChEBI" id="CHEBI:28938"/>
        <dbReference type="ChEBI" id="CHEBI:58241"/>
        <dbReference type="ChEBI" id="CHEBI:58514"/>
        <dbReference type="EC" id="3.5.3.23"/>
    </reaction>
</comment>
<comment type="pathway">
    <text evidence="1">Amino-acid degradation; L-arginine degradation via AST pathway; L-glutamate and succinate from L-arginine: step 2/5.</text>
</comment>
<comment type="subunit">
    <text evidence="1">Homodimer.</text>
</comment>
<comment type="similarity">
    <text evidence="1">Belongs to the succinylarginine dihydrolase family.</text>
</comment>
<accession>Q2Y8M6</accession>
<protein>
    <recommendedName>
        <fullName evidence="1">N-succinylarginine dihydrolase</fullName>
        <ecNumber evidence="1">3.5.3.23</ecNumber>
    </recommendedName>
</protein>
<sequence length="447" mass="49113">MNAYEANFDGLVGPTHNYGGLAVGNIASAESALTNSNPREAALQGLEKMKRLADLGLMQGVLPPQERPAVSVLRKLGFTGEDATIIRCAAKVAPGLLRACSSASSMWVANAATVSPSADTEDGKVHLTAANLPSQFHRSIEAPVTSAVLKRVFSNERYFVHHDPLPSNLYFGDEGAANHMRLCPRHGEPGVEIFVFGRSASRDIPKPLRFPARQSLEASEAVARLHQIKRGKELFVQQGPAAIDAGAFHNDVLAVANCDVLFYHEAAYRDWEETEARITKACDWPIHFIRTGEEDVTLAEAVRTYLFNAQLLTLPGNEMMILAPSECRDSHSARNFLERVVQDAANPIAHVEYVDLRQSMKNGGGPACLRLRVVLTEPELDAVQENSRVILDECLYNDLKAWIEKHYRECLSPTDLGDPALLQESRAALDELTTILGFGSLYDFQRP</sequence>
<evidence type="ECO:0000255" key="1">
    <source>
        <dbReference type="HAMAP-Rule" id="MF_01172"/>
    </source>
</evidence>
<feature type="chain" id="PRO_0000262359" description="N-succinylarginine dihydrolase">
    <location>
        <begin position="1"/>
        <end position="447"/>
    </location>
</feature>
<feature type="active site" evidence="1">
    <location>
        <position position="174"/>
    </location>
</feature>
<feature type="active site" evidence="1">
    <location>
        <position position="249"/>
    </location>
</feature>
<feature type="active site" description="Nucleophile" evidence="1">
    <location>
        <position position="368"/>
    </location>
</feature>
<feature type="binding site" evidence="1">
    <location>
        <begin position="19"/>
        <end position="28"/>
    </location>
    <ligand>
        <name>substrate</name>
    </ligand>
</feature>
<feature type="binding site" evidence="1">
    <location>
        <position position="110"/>
    </location>
    <ligand>
        <name>substrate</name>
    </ligand>
</feature>
<feature type="binding site" evidence="1">
    <location>
        <begin position="137"/>
        <end position="138"/>
    </location>
    <ligand>
        <name>substrate</name>
    </ligand>
</feature>
<feature type="binding site" evidence="1">
    <location>
        <position position="213"/>
    </location>
    <ligand>
        <name>substrate</name>
    </ligand>
</feature>
<feature type="binding site" evidence="1">
    <location>
        <position position="251"/>
    </location>
    <ligand>
        <name>substrate</name>
    </ligand>
</feature>
<feature type="binding site" evidence="1">
    <location>
        <position position="362"/>
    </location>
    <ligand>
        <name>substrate</name>
    </ligand>
</feature>